<sequence length="107" mass="11531">MKFSTTPTLEGQQITEYCGVVTGEAILGANIFRDFFAGIRDIVGGRSGAYEKELRKARQIAFAELEEQAEALGAQAVVGIDIDYETVGKDSSMLMVSVSGTAVKLRH</sequence>
<name>Y2166_ERWT9</name>
<accession>B2VC34</accession>
<gene>
    <name type="ordered locus">ETA_21660</name>
</gene>
<protein>
    <recommendedName>
        <fullName evidence="1">UPF0145 protein ETA_21660</fullName>
    </recommendedName>
</protein>
<proteinExistence type="inferred from homology"/>
<dbReference type="EMBL" id="CU468135">
    <property type="protein sequence ID" value="CAO97212.1"/>
    <property type="molecule type" value="Genomic_DNA"/>
</dbReference>
<dbReference type="RefSeq" id="WP_012441881.1">
    <property type="nucleotide sequence ID" value="NC_010694.1"/>
</dbReference>
<dbReference type="SMR" id="B2VC34"/>
<dbReference type="STRING" id="465817.ETA_21660"/>
<dbReference type="KEGG" id="eta:ETA_21660"/>
<dbReference type="eggNOG" id="COG0393">
    <property type="taxonomic scope" value="Bacteria"/>
</dbReference>
<dbReference type="HOGENOM" id="CLU_117144_3_0_6"/>
<dbReference type="OrthoDB" id="9796448at2"/>
<dbReference type="Proteomes" id="UP000001726">
    <property type="component" value="Chromosome"/>
</dbReference>
<dbReference type="Gene3D" id="3.30.110.70">
    <property type="entry name" value="Hypothetical protein apc22750. Chain B"/>
    <property type="match status" value="1"/>
</dbReference>
<dbReference type="HAMAP" id="MF_00338">
    <property type="entry name" value="UPF0145"/>
    <property type="match status" value="1"/>
</dbReference>
<dbReference type="InterPro" id="IPR035439">
    <property type="entry name" value="UPF0145_dom_sf"/>
</dbReference>
<dbReference type="InterPro" id="IPR002765">
    <property type="entry name" value="UPF0145_YbjQ-like"/>
</dbReference>
<dbReference type="NCBIfam" id="NF002776">
    <property type="entry name" value="PRK02877.1"/>
    <property type="match status" value="1"/>
</dbReference>
<dbReference type="PANTHER" id="PTHR34068">
    <property type="entry name" value="UPF0145 PROTEIN YBJQ"/>
    <property type="match status" value="1"/>
</dbReference>
<dbReference type="PANTHER" id="PTHR34068:SF1">
    <property type="entry name" value="UPF0145 PROTEIN YBJQ"/>
    <property type="match status" value="1"/>
</dbReference>
<dbReference type="Pfam" id="PF01906">
    <property type="entry name" value="YbjQ_1"/>
    <property type="match status" value="1"/>
</dbReference>
<dbReference type="SUPFAM" id="SSF117782">
    <property type="entry name" value="YbjQ-like"/>
    <property type="match status" value="1"/>
</dbReference>
<comment type="similarity">
    <text evidence="1">Belongs to the UPF0145 family.</text>
</comment>
<feature type="chain" id="PRO_1000119997" description="UPF0145 protein ETA_21660">
    <location>
        <begin position="1"/>
        <end position="107"/>
    </location>
</feature>
<organism>
    <name type="scientific">Erwinia tasmaniensis (strain DSM 17950 / CFBP 7177 / CIP 109463 / NCPPB 4357 / Et1/99)</name>
    <dbReference type="NCBI Taxonomy" id="465817"/>
    <lineage>
        <taxon>Bacteria</taxon>
        <taxon>Pseudomonadati</taxon>
        <taxon>Pseudomonadota</taxon>
        <taxon>Gammaproteobacteria</taxon>
        <taxon>Enterobacterales</taxon>
        <taxon>Erwiniaceae</taxon>
        <taxon>Erwinia</taxon>
    </lineage>
</organism>
<evidence type="ECO:0000255" key="1">
    <source>
        <dbReference type="HAMAP-Rule" id="MF_00338"/>
    </source>
</evidence>
<reference key="1">
    <citation type="journal article" date="2008" name="Environ. Microbiol.">
        <title>The genome of Erwinia tasmaniensis strain Et1/99, a non-pathogenic bacterium in the genus Erwinia.</title>
        <authorList>
            <person name="Kube M."/>
            <person name="Migdoll A.M."/>
            <person name="Mueller I."/>
            <person name="Kuhl H."/>
            <person name="Beck A."/>
            <person name="Reinhardt R."/>
            <person name="Geider K."/>
        </authorList>
    </citation>
    <scope>NUCLEOTIDE SEQUENCE [LARGE SCALE GENOMIC DNA]</scope>
    <source>
        <strain>DSM 17950 / CFBP 7177 / CIP 109463 / NCPPB 4357 / Et1/99</strain>
    </source>
</reference>
<keyword id="KW-1185">Reference proteome</keyword>